<sequence>MLVLLHAVFITVLTLLLLGRLQLLERLLLNHSFNLKTVADFNILYRSLAETRLLKVVLRLIFLVLLGFCCYRLLVILM</sequence>
<feature type="signal peptide" evidence="2">
    <location>
        <begin position="1"/>
        <end position="23"/>
    </location>
</feature>
<feature type="chain" id="PRO_0000106098" description="Non-structural protein 7">
    <location>
        <begin position="24"/>
        <end position="78"/>
    </location>
</feature>
<feature type="topological domain" description="Lumenal" evidence="1">
    <location>
        <begin position="24"/>
        <end position="57"/>
    </location>
</feature>
<feature type="transmembrane region" description="Helical" evidence="1">
    <location>
        <begin position="58"/>
        <end position="78"/>
    </location>
</feature>
<feature type="region of interest" description="Interaction with PPP1CC/PP1-gamma" evidence="1">
    <location>
        <begin position="54"/>
        <end position="65"/>
    </location>
</feature>
<protein>
    <recommendedName>
        <fullName>Non-structural protein 7</fullName>
        <shortName>ns7</shortName>
    </recommendedName>
    <alternativeName>
        <fullName>9 kDa hydrophobic protein</fullName>
        <shortName>HP</shortName>
    </alternativeName>
    <alternativeName>
        <fullName>Accessory protein 7</fullName>
        <shortName evidence="1">AcP7</shortName>
    </alternativeName>
    <alternativeName>
        <fullName>X3 protein</fullName>
    </alternativeName>
</protein>
<proteinExistence type="inferred from homology"/>
<organismHost>
    <name type="scientific">Sus scrofa</name>
    <name type="common">Pig</name>
    <dbReference type="NCBI Taxonomy" id="9823"/>
</organismHost>
<reference key="1">
    <citation type="journal article" date="1988" name="Mol. Microbiol.">
        <title>Sequence of the nucleoprotein gene from a virulent British field isolate of transmissible gastroenteritis virus and its expression in Saccharomyces cerevisiae.</title>
        <authorList>
            <person name="Britton P."/>
            <person name="Carmenes R.S."/>
            <person name="Page K.W."/>
            <person name="Garwes D.J."/>
            <person name="Parra F."/>
        </authorList>
    </citation>
    <scope>NUCLEOTIDE SEQUENCE [GENOMIC RNA]</scope>
</reference>
<evidence type="ECO:0000250" key="1">
    <source>
        <dbReference type="UniProtKB" id="P04136"/>
    </source>
</evidence>
<evidence type="ECO:0000255" key="2"/>
<evidence type="ECO:0000305" key="3"/>
<organism>
    <name type="scientific">Porcine transmissible gastroenteritis coronavirus (strain FS772/70)</name>
    <name type="common">TGEV</name>
    <dbReference type="NCBI Taxonomy" id="11150"/>
    <lineage>
        <taxon>Viruses</taxon>
        <taxon>Riboviria</taxon>
        <taxon>Orthornavirae</taxon>
        <taxon>Pisuviricota</taxon>
        <taxon>Pisoniviricetes</taxon>
        <taxon>Nidovirales</taxon>
        <taxon>Cornidovirineae</taxon>
        <taxon>Coronaviridae</taxon>
        <taxon>Orthocoronavirinae</taxon>
        <taxon>Alphacoronavirus</taxon>
        <taxon>Tegacovirus</taxon>
        <taxon>Alphacoronavirus 1</taxon>
    </lineage>
</organism>
<accession>P05992</accession>
<comment type="function">
    <text evidence="1">Inhibits the integrated stress response (ISR) in the infected cell by promoting EIF2S1/eIF-2alpha dephosphorylation (By similarity). Acts as a functional homolog of host PPP1R15A/GADD34 to recruit PP1 phosphatase and dephosphorylate host EIF2S1/eIF-2alpha (By similarity). May function in the formation of membrane-bound replication complexes or in the assembly of the virus.</text>
</comment>
<comment type="subunit">
    <text evidence="1">Interacts with serine/threonine-protein phosphatase PPP1CC/PP1-gamma; this interaction; this interaction probably promotes EIF2S1/eIF-2alpha dephosphorylation.</text>
</comment>
<comment type="subcellular location">
    <subcellularLocation>
        <location evidence="3">Host membrane</location>
        <topology evidence="1">Single-pass membrane protein</topology>
    </subcellularLocation>
</comment>
<comment type="similarity">
    <text evidence="3">Belongs to the coronaviruses ns7/ns7a protein family.</text>
</comment>
<gene>
    <name type="ORF">7</name>
</gene>
<dbReference type="EMBL" id="Y00542">
    <property type="protein sequence ID" value="CAA68608.1"/>
    <property type="molecule type" value="Genomic_RNA"/>
</dbReference>
<dbReference type="PIR" id="S03763">
    <property type="entry name" value="S03763"/>
</dbReference>
<dbReference type="GO" id="GO:0033644">
    <property type="term" value="C:host cell membrane"/>
    <property type="evidence" value="ECO:0007669"/>
    <property type="project" value="UniProtKB-SubCell"/>
</dbReference>
<dbReference type="GO" id="GO:0016020">
    <property type="term" value="C:membrane"/>
    <property type="evidence" value="ECO:0007669"/>
    <property type="project" value="UniProtKB-KW"/>
</dbReference>
<dbReference type="InterPro" id="IPR003449">
    <property type="entry name" value="Corona_7"/>
</dbReference>
<dbReference type="Pfam" id="PF02398">
    <property type="entry name" value="Corona_7"/>
    <property type="match status" value="2"/>
</dbReference>
<keyword id="KW-1043">Host membrane</keyword>
<keyword id="KW-0472">Membrane</keyword>
<keyword id="KW-0732">Signal</keyword>
<keyword id="KW-0812">Transmembrane</keyword>
<keyword id="KW-1133">Transmembrane helix</keyword>
<name>NS7_CVPFS</name>